<organism>
    <name type="scientific">Haemophilus influenzae (strain ATCC 51907 / DSM 11121 / KW20 / Rd)</name>
    <dbReference type="NCBI Taxonomy" id="71421"/>
    <lineage>
        <taxon>Bacteria</taxon>
        <taxon>Pseudomonadati</taxon>
        <taxon>Pseudomonadota</taxon>
        <taxon>Gammaproteobacteria</taxon>
        <taxon>Pasteurellales</taxon>
        <taxon>Pasteurellaceae</taxon>
        <taxon>Haemophilus</taxon>
    </lineage>
</organism>
<gene>
    <name type="ordered locus">HI_1724</name>
</gene>
<feature type="chain" id="PRO_0000214650" description="UPF0231 protein HI_1724">
    <location>
        <begin position="1"/>
        <end position="117"/>
    </location>
</feature>
<reference key="1">
    <citation type="journal article" date="1995" name="Science">
        <title>Whole-genome random sequencing and assembly of Haemophilus influenzae Rd.</title>
        <authorList>
            <person name="Fleischmann R.D."/>
            <person name="Adams M.D."/>
            <person name="White O."/>
            <person name="Clayton R.A."/>
            <person name="Kirkness E.F."/>
            <person name="Kerlavage A.R."/>
            <person name="Bult C.J."/>
            <person name="Tomb J.-F."/>
            <person name="Dougherty B.A."/>
            <person name="Merrick J.M."/>
            <person name="McKenney K."/>
            <person name="Sutton G.G."/>
            <person name="FitzHugh W."/>
            <person name="Fields C.A."/>
            <person name="Gocayne J.D."/>
            <person name="Scott J.D."/>
            <person name="Shirley R."/>
            <person name="Liu L.-I."/>
            <person name="Glodek A."/>
            <person name="Kelley J.M."/>
            <person name="Weidman J.F."/>
            <person name="Phillips C.A."/>
            <person name="Spriggs T."/>
            <person name="Hedblom E."/>
            <person name="Cotton M.D."/>
            <person name="Utterback T.R."/>
            <person name="Hanna M.C."/>
            <person name="Nguyen D.T."/>
            <person name="Saudek D.M."/>
            <person name="Brandon R.C."/>
            <person name="Fine L.D."/>
            <person name="Fritchman J.L."/>
            <person name="Fuhrmann J.L."/>
            <person name="Geoghagen N.S.M."/>
            <person name="Gnehm C.L."/>
            <person name="McDonald L.A."/>
            <person name="Small K.V."/>
            <person name="Fraser C.M."/>
            <person name="Smith H.O."/>
            <person name="Venter J.C."/>
        </authorList>
    </citation>
    <scope>NUCLEOTIDE SEQUENCE [LARGE SCALE GENOMIC DNA]</scope>
    <source>
        <strain>ATCC 51907 / DSM 11121 / KW20 / Rd</strain>
    </source>
</reference>
<comment type="similarity">
    <text evidence="1">Belongs to the UPF0231 family.</text>
</comment>
<comment type="sequence caution" evidence="1">
    <conflict type="erroneous initiation">
        <sequence resource="EMBL-CDS" id="AAC23370"/>
    </conflict>
</comment>
<sequence length="117" mass="13487">MDFQFTHYQGNVSVKCSMEHIALANWFNTEVRSNSDKILTALSTAKSLIENQEKVLIGTEYTLFLNADEVMVRANNLAIESDEILEQDFHYYDEESLAFCGTQDFIHFLQSYVDFIA</sequence>
<protein>
    <recommendedName>
        <fullName>UPF0231 protein HI_1724</fullName>
    </recommendedName>
</protein>
<proteinExistence type="inferred from homology"/>
<dbReference type="EMBL" id="L42023">
    <property type="protein sequence ID" value="AAC23370.1"/>
    <property type="status" value="ALT_INIT"/>
    <property type="molecule type" value="Genomic_DNA"/>
</dbReference>
<dbReference type="PIR" id="A64041">
    <property type="entry name" value="A64041"/>
</dbReference>
<dbReference type="RefSeq" id="NP_439865.2">
    <property type="nucleotide sequence ID" value="NC_000907.1"/>
</dbReference>
<dbReference type="SMR" id="P44297"/>
<dbReference type="STRING" id="71421.HI_1724"/>
<dbReference type="EnsemblBacteria" id="AAC23370">
    <property type="protein sequence ID" value="AAC23370"/>
    <property type="gene ID" value="HI_1724"/>
</dbReference>
<dbReference type="KEGG" id="hin:HI_1724"/>
<dbReference type="PATRIC" id="fig|71421.8.peg.1803"/>
<dbReference type="eggNOG" id="COG3112">
    <property type="taxonomic scope" value="Bacteria"/>
</dbReference>
<dbReference type="HOGENOM" id="CLU_139226_0_0_6"/>
<dbReference type="OrthoDB" id="5739292at2"/>
<dbReference type="PhylomeDB" id="P44297"/>
<dbReference type="BioCyc" id="HINF71421:G1GJ1-1739-MONOMER"/>
<dbReference type="Proteomes" id="UP000000579">
    <property type="component" value="Chromosome"/>
</dbReference>
<dbReference type="HAMAP" id="MF_01053">
    <property type="entry name" value="UPF0231"/>
    <property type="match status" value="1"/>
</dbReference>
<dbReference type="InterPro" id="IPR008249">
    <property type="entry name" value="UPF0231"/>
</dbReference>
<dbReference type="NCBIfam" id="NF003575">
    <property type="entry name" value="PRK05248.1-2"/>
    <property type="match status" value="1"/>
</dbReference>
<dbReference type="Pfam" id="PF06062">
    <property type="entry name" value="UPF0231"/>
    <property type="match status" value="1"/>
</dbReference>
<dbReference type="PIRSF" id="PIRSF006287">
    <property type="entry name" value="UCP006287"/>
    <property type="match status" value="1"/>
</dbReference>
<accession>P44297</accession>
<name>Y1724_HAEIN</name>
<keyword id="KW-1185">Reference proteome</keyword>
<evidence type="ECO:0000305" key="1"/>